<gene>
    <name evidence="1" type="primary">queA</name>
    <name type="ordered locus">PFLU_5078</name>
</gene>
<comment type="function">
    <text evidence="1">Transfers and isomerizes the ribose moiety from AdoMet to the 7-aminomethyl group of 7-deazaguanine (preQ1-tRNA) to give epoxyqueuosine (oQ-tRNA).</text>
</comment>
<comment type="catalytic activity">
    <reaction evidence="1">
        <text>7-aminomethyl-7-carbaguanosine(34) in tRNA + S-adenosyl-L-methionine = epoxyqueuosine(34) in tRNA + adenine + L-methionine + 2 H(+)</text>
        <dbReference type="Rhea" id="RHEA:32155"/>
        <dbReference type="Rhea" id="RHEA-COMP:10342"/>
        <dbReference type="Rhea" id="RHEA-COMP:18582"/>
        <dbReference type="ChEBI" id="CHEBI:15378"/>
        <dbReference type="ChEBI" id="CHEBI:16708"/>
        <dbReference type="ChEBI" id="CHEBI:57844"/>
        <dbReference type="ChEBI" id="CHEBI:59789"/>
        <dbReference type="ChEBI" id="CHEBI:82833"/>
        <dbReference type="ChEBI" id="CHEBI:194443"/>
        <dbReference type="EC" id="2.4.99.17"/>
    </reaction>
</comment>
<comment type="pathway">
    <text evidence="1">tRNA modification; tRNA-queuosine biosynthesis.</text>
</comment>
<comment type="subunit">
    <text evidence="1">Monomer.</text>
</comment>
<comment type="subcellular location">
    <subcellularLocation>
        <location evidence="1">Cytoplasm</location>
    </subcellularLocation>
</comment>
<comment type="similarity">
    <text evidence="1">Belongs to the QueA family.</text>
</comment>
<dbReference type="EC" id="2.4.99.17" evidence="1"/>
<dbReference type="EMBL" id="AM181176">
    <property type="protein sequence ID" value="CAY52079.1"/>
    <property type="molecule type" value="Genomic_DNA"/>
</dbReference>
<dbReference type="RefSeq" id="WP_015885754.1">
    <property type="nucleotide sequence ID" value="NC_012660.1"/>
</dbReference>
<dbReference type="SMR" id="C3K1N5"/>
<dbReference type="STRING" id="294.SRM1_04666"/>
<dbReference type="GeneID" id="93466692"/>
<dbReference type="PATRIC" id="fig|216595.4.peg.5213"/>
<dbReference type="eggNOG" id="COG0809">
    <property type="taxonomic scope" value="Bacteria"/>
</dbReference>
<dbReference type="HOGENOM" id="CLU_039110_1_0_6"/>
<dbReference type="OrthoDB" id="9805933at2"/>
<dbReference type="UniPathway" id="UPA00392"/>
<dbReference type="GO" id="GO:0005737">
    <property type="term" value="C:cytoplasm"/>
    <property type="evidence" value="ECO:0007669"/>
    <property type="project" value="UniProtKB-SubCell"/>
</dbReference>
<dbReference type="GO" id="GO:0051075">
    <property type="term" value="F:S-adenosylmethionine:tRNA ribosyltransferase-isomerase activity"/>
    <property type="evidence" value="ECO:0007669"/>
    <property type="project" value="UniProtKB-EC"/>
</dbReference>
<dbReference type="GO" id="GO:0008616">
    <property type="term" value="P:queuosine biosynthetic process"/>
    <property type="evidence" value="ECO:0007669"/>
    <property type="project" value="UniProtKB-UniRule"/>
</dbReference>
<dbReference type="GO" id="GO:0002099">
    <property type="term" value="P:tRNA wobble guanine modification"/>
    <property type="evidence" value="ECO:0007669"/>
    <property type="project" value="TreeGrafter"/>
</dbReference>
<dbReference type="FunFam" id="2.40.10.240:FF:000001">
    <property type="entry name" value="S-adenosylmethionine:tRNA ribosyltransferase-isomerase"/>
    <property type="match status" value="1"/>
</dbReference>
<dbReference type="FunFam" id="3.40.1780.10:FF:000001">
    <property type="entry name" value="S-adenosylmethionine:tRNA ribosyltransferase-isomerase"/>
    <property type="match status" value="1"/>
</dbReference>
<dbReference type="Gene3D" id="2.40.10.240">
    <property type="entry name" value="QueA-like"/>
    <property type="match status" value="1"/>
</dbReference>
<dbReference type="Gene3D" id="3.40.1780.10">
    <property type="entry name" value="QueA-like"/>
    <property type="match status" value="1"/>
</dbReference>
<dbReference type="HAMAP" id="MF_00113">
    <property type="entry name" value="QueA"/>
    <property type="match status" value="1"/>
</dbReference>
<dbReference type="InterPro" id="IPR003699">
    <property type="entry name" value="QueA"/>
</dbReference>
<dbReference type="InterPro" id="IPR042118">
    <property type="entry name" value="QueA_dom1"/>
</dbReference>
<dbReference type="InterPro" id="IPR042119">
    <property type="entry name" value="QueA_dom2"/>
</dbReference>
<dbReference type="InterPro" id="IPR036100">
    <property type="entry name" value="QueA_sf"/>
</dbReference>
<dbReference type="NCBIfam" id="NF001140">
    <property type="entry name" value="PRK00147.1"/>
    <property type="match status" value="1"/>
</dbReference>
<dbReference type="NCBIfam" id="TIGR00113">
    <property type="entry name" value="queA"/>
    <property type="match status" value="1"/>
</dbReference>
<dbReference type="PANTHER" id="PTHR30307">
    <property type="entry name" value="S-ADENOSYLMETHIONINE:TRNA RIBOSYLTRANSFERASE-ISOMERASE"/>
    <property type="match status" value="1"/>
</dbReference>
<dbReference type="PANTHER" id="PTHR30307:SF0">
    <property type="entry name" value="S-ADENOSYLMETHIONINE:TRNA RIBOSYLTRANSFERASE-ISOMERASE"/>
    <property type="match status" value="1"/>
</dbReference>
<dbReference type="Pfam" id="PF02547">
    <property type="entry name" value="Queuosine_synth"/>
    <property type="match status" value="1"/>
</dbReference>
<dbReference type="SUPFAM" id="SSF111337">
    <property type="entry name" value="QueA-like"/>
    <property type="match status" value="1"/>
</dbReference>
<proteinExistence type="inferred from homology"/>
<keyword id="KW-0963">Cytoplasm</keyword>
<keyword id="KW-0671">Queuosine biosynthesis</keyword>
<keyword id="KW-0949">S-adenosyl-L-methionine</keyword>
<keyword id="KW-0808">Transferase</keyword>
<organism>
    <name type="scientific">Pseudomonas fluorescens (strain SBW25)</name>
    <dbReference type="NCBI Taxonomy" id="216595"/>
    <lineage>
        <taxon>Bacteria</taxon>
        <taxon>Pseudomonadati</taxon>
        <taxon>Pseudomonadota</taxon>
        <taxon>Gammaproteobacteria</taxon>
        <taxon>Pseudomonadales</taxon>
        <taxon>Pseudomonadaceae</taxon>
        <taxon>Pseudomonas</taxon>
    </lineage>
</organism>
<protein>
    <recommendedName>
        <fullName evidence="1">S-adenosylmethionine:tRNA ribosyltransferase-isomerase</fullName>
        <ecNumber evidence="1">2.4.99.17</ecNumber>
    </recommendedName>
    <alternativeName>
        <fullName evidence="1">Queuosine biosynthesis protein QueA</fullName>
    </alternativeName>
</protein>
<accession>C3K1N5</accession>
<feature type="chain" id="PRO_1000202958" description="S-adenosylmethionine:tRNA ribosyltransferase-isomerase">
    <location>
        <begin position="1"/>
        <end position="349"/>
    </location>
</feature>
<name>QUEA_PSEFS</name>
<evidence type="ECO:0000255" key="1">
    <source>
        <dbReference type="HAMAP-Rule" id="MF_00113"/>
    </source>
</evidence>
<reference key="1">
    <citation type="journal article" date="2009" name="Genome Biol.">
        <title>Genomic and genetic analyses of diversity and plant interactions of Pseudomonas fluorescens.</title>
        <authorList>
            <person name="Silby M.W."/>
            <person name="Cerdeno-Tarraga A.M."/>
            <person name="Vernikos G.S."/>
            <person name="Giddens S.R."/>
            <person name="Jackson R.W."/>
            <person name="Preston G.M."/>
            <person name="Zhang X.-X."/>
            <person name="Moon C.D."/>
            <person name="Gehrig S.M."/>
            <person name="Godfrey S.A.C."/>
            <person name="Knight C.G."/>
            <person name="Malone J.G."/>
            <person name="Robinson Z."/>
            <person name="Spiers A.J."/>
            <person name="Harris S."/>
            <person name="Challis G.L."/>
            <person name="Yaxley A.M."/>
            <person name="Harris D."/>
            <person name="Seeger K."/>
            <person name="Murphy L."/>
            <person name="Rutter S."/>
            <person name="Squares R."/>
            <person name="Quail M.A."/>
            <person name="Saunders E."/>
            <person name="Mavromatis K."/>
            <person name="Brettin T.S."/>
            <person name="Bentley S.D."/>
            <person name="Hothersall J."/>
            <person name="Stephens E."/>
            <person name="Thomas C.M."/>
            <person name="Parkhill J."/>
            <person name="Levy S.B."/>
            <person name="Rainey P.B."/>
            <person name="Thomson N.R."/>
        </authorList>
    </citation>
    <scope>NUCLEOTIDE SEQUENCE [LARGE SCALE GENOMIC DNA]</scope>
    <source>
        <strain>SBW25</strain>
    </source>
</reference>
<sequence>MRVADFTFELPDSLIARHPLAERRASRLLTLDGVSGALAHRQFTDLLEHLRPGDLMVFNNTRVIPARLFGQKASGGKLEILVERVLDSHRVLAHVRSSKSPKPGSSILIDGGGEAEMVARHDALFELKFAEEVLPLLERVGHMPLPPYIDRPDEDSDRERYQTVYSQRLGAVAAPTAGLHFDQPLLDAIAAKGVETAYVTLHVGAGTFQPVRVDNIEDHHMHSEWLEVSQDVVDAVEACKARGGRVIAVGTTSVRSLESAARDGVLKPFSGDTDIFIYPGRPFHVVDCLVTNFHLPESTLLMLVSAFAGYPETMAAYQAAIDNGYRFFSYGDAMFITRNPAPRGPEEQL</sequence>